<organism>
    <name type="scientific">Pseudomonas savastanoi pv. phaseolicola (strain 1448A / Race 6)</name>
    <name type="common">Pseudomonas syringae pv. phaseolicola (strain 1448A / Race 6)</name>
    <dbReference type="NCBI Taxonomy" id="264730"/>
    <lineage>
        <taxon>Bacteria</taxon>
        <taxon>Pseudomonadati</taxon>
        <taxon>Pseudomonadota</taxon>
        <taxon>Gammaproteobacteria</taxon>
        <taxon>Pseudomonadales</taxon>
        <taxon>Pseudomonadaceae</taxon>
        <taxon>Pseudomonas</taxon>
    </lineage>
</organism>
<protein>
    <recommendedName>
        <fullName evidence="1">Glycerol-3-phosphate acyltransferase</fullName>
    </recommendedName>
    <alternativeName>
        <fullName evidence="1">Acyl-PO4 G3P acyltransferase</fullName>
    </alternativeName>
    <alternativeName>
        <fullName evidence="1">Acyl-phosphate--glycerol-3-phosphate acyltransferase</fullName>
    </alternativeName>
    <alternativeName>
        <fullName evidence="1">G3P acyltransferase</fullName>
        <shortName evidence="1">GPAT</shortName>
        <ecNumber evidence="1">2.3.1.275</ecNumber>
    </alternativeName>
    <alternativeName>
        <fullName evidence="1">Lysophosphatidic acid synthase</fullName>
        <shortName evidence="1">LPA synthase</shortName>
    </alternativeName>
</protein>
<keyword id="KW-0997">Cell inner membrane</keyword>
<keyword id="KW-1003">Cell membrane</keyword>
<keyword id="KW-0444">Lipid biosynthesis</keyword>
<keyword id="KW-0443">Lipid metabolism</keyword>
<keyword id="KW-0472">Membrane</keyword>
<keyword id="KW-0594">Phospholipid biosynthesis</keyword>
<keyword id="KW-1208">Phospholipid metabolism</keyword>
<keyword id="KW-0808">Transferase</keyword>
<keyword id="KW-0812">Transmembrane</keyword>
<keyword id="KW-1133">Transmembrane helix</keyword>
<sequence length="192" mass="20607">MVSMFWLLATFAYLLGSLSFAILLSRLSGRPDPRASGSGNAGATNMLRLAGKKLAILTLLGDLCKGLLPILIASAWNLNIAQQGWIGVCAVLGHLFPVYFRFRGGKGVATAAGVLLGLYPPAAALAIAAWLLTLYLTRTSSLAALIATPLTLPLLAWQEPHALLPMSVLTLLIVWRHRGNLRDLLAGRERHF</sequence>
<dbReference type="EC" id="2.3.1.275" evidence="1"/>
<dbReference type="EMBL" id="CP000058">
    <property type="protein sequence ID" value="AAZ35376.1"/>
    <property type="molecule type" value="Genomic_DNA"/>
</dbReference>
<dbReference type="SMR" id="Q48NU7"/>
<dbReference type="KEGG" id="psp:PSPPH_0623"/>
<dbReference type="eggNOG" id="COG0344">
    <property type="taxonomic scope" value="Bacteria"/>
</dbReference>
<dbReference type="HOGENOM" id="CLU_081254_0_0_6"/>
<dbReference type="UniPathway" id="UPA00085"/>
<dbReference type="Proteomes" id="UP000000551">
    <property type="component" value="Chromosome"/>
</dbReference>
<dbReference type="GO" id="GO:0005886">
    <property type="term" value="C:plasma membrane"/>
    <property type="evidence" value="ECO:0007669"/>
    <property type="project" value="UniProtKB-SubCell"/>
</dbReference>
<dbReference type="GO" id="GO:0043772">
    <property type="term" value="F:acyl-phosphate glycerol-3-phosphate acyltransferase activity"/>
    <property type="evidence" value="ECO:0007669"/>
    <property type="project" value="UniProtKB-UniRule"/>
</dbReference>
<dbReference type="GO" id="GO:0008654">
    <property type="term" value="P:phospholipid biosynthetic process"/>
    <property type="evidence" value="ECO:0007669"/>
    <property type="project" value="UniProtKB-UniRule"/>
</dbReference>
<dbReference type="HAMAP" id="MF_01043">
    <property type="entry name" value="PlsY"/>
    <property type="match status" value="1"/>
</dbReference>
<dbReference type="InterPro" id="IPR003811">
    <property type="entry name" value="G3P_acylTferase_PlsY"/>
</dbReference>
<dbReference type="NCBIfam" id="TIGR00023">
    <property type="entry name" value="glycerol-3-phosphate 1-O-acyltransferase PlsY"/>
    <property type="match status" value="1"/>
</dbReference>
<dbReference type="PANTHER" id="PTHR30309:SF0">
    <property type="entry name" value="GLYCEROL-3-PHOSPHATE ACYLTRANSFERASE-RELATED"/>
    <property type="match status" value="1"/>
</dbReference>
<dbReference type="PANTHER" id="PTHR30309">
    <property type="entry name" value="INNER MEMBRANE PROTEIN YGIH"/>
    <property type="match status" value="1"/>
</dbReference>
<dbReference type="Pfam" id="PF02660">
    <property type="entry name" value="G3P_acyltransf"/>
    <property type="match status" value="1"/>
</dbReference>
<dbReference type="SMART" id="SM01207">
    <property type="entry name" value="G3P_acyltransf"/>
    <property type="match status" value="1"/>
</dbReference>
<accession>Q48NU7</accession>
<proteinExistence type="inferred from homology"/>
<comment type="function">
    <text evidence="1">Catalyzes the transfer of an acyl group from acyl-phosphate (acyl-PO(4)) to glycerol-3-phosphate (G3P) to form lysophosphatidic acid (LPA). This enzyme utilizes acyl-phosphate as fatty acyl donor, but not acyl-CoA or acyl-ACP.</text>
</comment>
<comment type="catalytic activity">
    <reaction evidence="1">
        <text>an acyl phosphate + sn-glycerol 3-phosphate = a 1-acyl-sn-glycero-3-phosphate + phosphate</text>
        <dbReference type="Rhea" id="RHEA:34075"/>
        <dbReference type="ChEBI" id="CHEBI:43474"/>
        <dbReference type="ChEBI" id="CHEBI:57597"/>
        <dbReference type="ChEBI" id="CHEBI:57970"/>
        <dbReference type="ChEBI" id="CHEBI:59918"/>
        <dbReference type="EC" id="2.3.1.275"/>
    </reaction>
</comment>
<comment type="pathway">
    <text evidence="1">Lipid metabolism; phospholipid metabolism.</text>
</comment>
<comment type="subunit">
    <text evidence="1">Probably interacts with PlsX.</text>
</comment>
<comment type="subcellular location">
    <subcellularLocation>
        <location evidence="1">Cell inner membrane</location>
        <topology evidence="1">Multi-pass membrane protein</topology>
    </subcellularLocation>
</comment>
<comment type="similarity">
    <text evidence="1">Belongs to the PlsY family.</text>
</comment>
<gene>
    <name evidence="1" type="primary">plsY</name>
    <name type="ordered locus">PSPPH_0623</name>
</gene>
<feature type="chain" id="PRO_0000188431" description="Glycerol-3-phosphate acyltransferase">
    <location>
        <begin position="1"/>
        <end position="192"/>
    </location>
</feature>
<feature type="transmembrane region" description="Helical" evidence="1">
    <location>
        <begin position="4"/>
        <end position="24"/>
    </location>
</feature>
<feature type="transmembrane region" description="Helical" evidence="1">
    <location>
        <begin position="54"/>
        <end position="74"/>
    </location>
</feature>
<feature type="transmembrane region" description="Helical" evidence="1">
    <location>
        <begin position="80"/>
        <end position="100"/>
    </location>
</feature>
<feature type="transmembrane region" description="Helical" evidence="1">
    <location>
        <begin position="112"/>
        <end position="132"/>
    </location>
</feature>
<feature type="transmembrane region" description="Helical" evidence="1">
    <location>
        <begin position="154"/>
        <end position="174"/>
    </location>
</feature>
<evidence type="ECO:0000255" key="1">
    <source>
        <dbReference type="HAMAP-Rule" id="MF_01043"/>
    </source>
</evidence>
<reference key="1">
    <citation type="journal article" date="2005" name="J. Bacteriol.">
        <title>Whole-genome sequence analysis of Pseudomonas syringae pv. phaseolicola 1448A reveals divergence among pathovars in genes involved in virulence and transposition.</title>
        <authorList>
            <person name="Joardar V."/>
            <person name="Lindeberg M."/>
            <person name="Jackson R.W."/>
            <person name="Selengut J."/>
            <person name="Dodson R."/>
            <person name="Brinkac L.M."/>
            <person name="Daugherty S.C."/>
            <person name="DeBoy R.T."/>
            <person name="Durkin A.S."/>
            <person name="Gwinn Giglio M."/>
            <person name="Madupu R."/>
            <person name="Nelson W.C."/>
            <person name="Rosovitz M.J."/>
            <person name="Sullivan S.A."/>
            <person name="Crabtree J."/>
            <person name="Creasy T."/>
            <person name="Davidsen T.M."/>
            <person name="Haft D.H."/>
            <person name="Zafar N."/>
            <person name="Zhou L."/>
            <person name="Halpin R."/>
            <person name="Holley T."/>
            <person name="Khouri H.M."/>
            <person name="Feldblyum T.V."/>
            <person name="White O."/>
            <person name="Fraser C.M."/>
            <person name="Chatterjee A.K."/>
            <person name="Cartinhour S."/>
            <person name="Schneider D."/>
            <person name="Mansfield J.W."/>
            <person name="Collmer A."/>
            <person name="Buell R."/>
        </authorList>
    </citation>
    <scope>NUCLEOTIDE SEQUENCE [LARGE SCALE GENOMIC DNA]</scope>
    <source>
        <strain>1448A / Race 6</strain>
    </source>
</reference>
<name>PLSY_PSE14</name>